<reference key="1">
    <citation type="journal article" date="1991" name="Mol. Endocrinol.">
        <title>Two related helix-loop-helix proteins participate in separate cell-specific complexes that bind the insulin enhancer.</title>
        <authorList>
            <person name="German M.S."/>
            <person name="Blanar M.A."/>
            <person name="Nelson C."/>
            <person name="Moss L.G."/>
            <person name="Rutter W.J."/>
        </authorList>
    </citation>
    <scope>NUCLEOTIDE SEQUENCE [MRNA] (ISOFORMS E12 AND E47)</scope>
    <scope>FUNCTION</scope>
    <source>
        <tissue>Insulinoma</tissue>
    </source>
</reference>
<feature type="chain" id="PRO_0000127467" description="Transcription factor E2-alpha">
    <location>
        <begin position="1"/>
        <end position="649"/>
    </location>
</feature>
<feature type="domain" description="bHLH" evidence="5">
    <location>
        <begin position="544"/>
        <end position="597"/>
    </location>
</feature>
<feature type="region of interest" description="Disordered" evidence="6">
    <location>
        <begin position="34"/>
        <end position="107"/>
    </location>
</feature>
<feature type="region of interest" description="Disordered" evidence="6">
    <location>
        <begin position="127"/>
        <end position="206"/>
    </location>
</feature>
<feature type="region of interest" description="Disordered" evidence="6">
    <location>
        <begin position="222"/>
        <end position="267"/>
    </location>
</feature>
<feature type="region of interest" description="Disordered" evidence="6">
    <location>
        <begin position="291"/>
        <end position="325"/>
    </location>
</feature>
<feature type="region of interest" description="Disordered" evidence="6">
    <location>
        <begin position="339"/>
        <end position="382"/>
    </location>
</feature>
<feature type="region of interest" description="Leucine-zipper">
    <location>
        <begin position="385"/>
        <end position="420"/>
    </location>
</feature>
<feature type="region of interest" description="Disordered" evidence="6">
    <location>
        <begin position="431"/>
        <end position="547"/>
    </location>
</feature>
<feature type="short sequence motif" description="Nuclear localization signal" evidence="4">
    <location>
        <begin position="171"/>
        <end position="177"/>
    </location>
</feature>
<feature type="compositionally biased region" description="Polar residues" evidence="6">
    <location>
        <begin position="56"/>
        <end position="76"/>
    </location>
</feature>
<feature type="compositionally biased region" description="Polar residues" evidence="6">
    <location>
        <begin position="85"/>
        <end position="94"/>
    </location>
</feature>
<feature type="compositionally biased region" description="Low complexity" evidence="6">
    <location>
        <begin position="127"/>
        <end position="143"/>
    </location>
</feature>
<feature type="compositionally biased region" description="Polar residues" evidence="6">
    <location>
        <begin position="145"/>
        <end position="156"/>
    </location>
</feature>
<feature type="compositionally biased region" description="Low complexity" evidence="6">
    <location>
        <begin position="182"/>
        <end position="193"/>
    </location>
</feature>
<feature type="compositionally biased region" description="Low complexity" evidence="6">
    <location>
        <begin position="242"/>
        <end position="259"/>
    </location>
</feature>
<feature type="compositionally biased region" description="Low complexity" evidence="6">
    <location>
        <begin position="339"/>
        <end position="352"/>
    </location>
</feature>
<feature type="compositionally biased region" description="Polar residues" evidence="6">
    <location>
        <begin position="448"/>
        <end position="469"/>
    </location>
</feature>
<feature type="compositionally biased region" description="Basic and acidic residues" evidence="6">
    <location>
        <begin position="537"/>
        <end position="547"/>
    </location>
</feature>
<feature type="modified residue" description="Phosphoserine" evidence="3">
    <location>
        <position position="135"/>
    </location>
</feature>
<feature type="modified residue" description="Phosphoserine" evidence="3">
    <location>
        <position position="140"/>
    </location>
</feature>
<feature type="modified residue" description="Phosphothreonine" evidence="2">
    <location>
        <position position="351"/>
    </location>
</feature>
<feature type="modified residue" description="Phosphoserine" evidence="3">
    <location>
        <position position="355"/>
    </location>
</feature>
<feature type="modified residue" description="Omega-N-methylarginine" evidence="2">
    <location>
        <position position="367"/>
    </location>
</feature>
<feature type="modified residue" description="Phosphoserine" evidence="3">
    <location>
        <position position="375"/>
    </location>
</feature>
<feature type="modified residue" description="Phosphoserine" evidence="3">
    <location>
        <position position="524"/>
    </location>
</feature>
<feature type="cross-link" description="Glycyl lysine isopeptide (Lys-Gly) (interchain with G-Cter in SUMO2)" evidence="3">
    <location>
        <position position="494"/>
    </location>
</feature>
<feature type="cross-link" description="Glycyl lysine isopeptide (Lys-Gly) (interchain with G-Cter in SUMO2)" evidence="3">
    <location>
        <position position="620"/>
    </location>
</feature>
<feature type="splice variant" id="VSP_002156" description="In isoform E47." evidence="7">
    <original>DEDDLLPPEQKAEREKERRVANNARERLRVRDINEAFKELGRMCQLHLSSEKPQTKLLILHQAVAVILS</original>
    <variation>STDEVLSLEEKDLRDRERRMANNARERVRVRDINEAFRELGRICQLHLKSDKAQTKLLILQQAVQVILG</variation>
    <location>
        <begin position="528"/>
        <end position="596"/>
    </location>
</feature>
<feature type="modified residue" description="Phosphothreonine" evidence="2">
    <location sequence="P98180-2">
        <position position="529"/>
    </location>
</feature>
<comment type="function">
    <text evidence="2 3">Transcriptional regulator (PubMed:1710033). Involved in the initiation of neuronal differentiation and mesenchymal to epithelial transition (By similarity). Heterodimers between TCF3 and tissue-specific basic helix-loop-helix (bHLH) proteins play major roles in determining tissue-specific cell fate during embryogenesis, like muscle or early B-cell differentiation (By similarity). Together with TCF15, required for the mesenchymal to epithelial transition (By similarity). Dimers bind DNA on E-box motifs: 5'-CANNTG-3' (By similarity). Binds to the kappa-E2 site in the kappa immunoglobulin gene enhancer (By similarity). Binds to IEB1 and IEB2, which are short DNA sequences in the insulin gene transcription control region (By similarity).</text>
</comment>
<comment type="function">
    <molecule>Isoform E47</molecule>
    <text evidence="3">Facilitates ATOH7 binding to DNA at the consensus sequence 5'-CAGGTG-3', and positively regulates transcriptional activity.</text>
</comment>
<comment type="subunit">
    <text evidence="2 3">Homodimer. Heterodimer; efficient DNA binding requires dimerization with another bHLH protein. Forms a heterodimer with TWIST1 and TWIST2. Forms a heterodimer with NEUROD1; the heterodimer is inhibited in presence of ID2, but not NR0B2, to E-box element. Forms a heterodimer with TCF15; the heterodimer binds E-box element. Forms a heterodimer with MYOG; heterodimerization enhances MYOG DNA-binding and transcriptional activities. Forms a heterodimer with ATOH8; repress transcription of TCF3 and TCF3-NEUROG3 dimer-induced transactivation of E box-dependent promoters. Component of a nuclear TAL-1 complex composed at least of CBFA2T3, LDB1, TAL1 and TCF3. Interacts with NEUROD2 (By similarity). Interacts with EP300 (By similarity). Interacts with PTF1A, TGFB1I1 and UBE2I (By similarity). Interacts with BHLHA9 (By similarity). Interacts with ASB2; the interaction is mediated by SKP2 and targets TCF3 for Notch-induced proteasomal degradation (By similarity). Interacts with transcription factor ASCL5/AmeloD (By similarity).</text>
</comment>
<comment type="subunit">
    <molecule>Isoform E12</molecule>
    <text evidence="2 3">Interacts with RALGAPA1 (By similarity). Interacts with FIGLA (By similarity).</text>
</comment>
<comment type="subunit">
    <molecule>Isoform E47</molecule>
    <text evidence="3">Forms a heterodimer with ATOH7; required for ATOH7 DNA-binding.</text>
</comment>
<comment type="subcellular location">
    <subcellularLocation>
        <location evidence="2">Nucleus</location>
    </subcellularLocation>
</comment>
<comment type="alternative products">
    <event type="alternative splicing"/>
    <isoform>
        <id>P98180-1</id>
        <name>E12</name>
        <name>PAN-2</name>
        <sequence type="displayed"/>
    </isoform>
    <isoform>
        <id>P98180-2</id>
        <name>E47</name>
        <name>PAN-1</name>
        <sequence type="described" ref="VSP_002156"/>
    </isoform>
</comment>
<comment type="PTM">
    <text evidence="1">Phosphorylated following NGF stimulation.</text>
</comment>
<comment type="PTM">
    <text evidence="3">Undergoes Notch-induced ubiquitination and subsequent proteasomal degradation which is mediated by ASB1 or ASB2, the substrate-recognition components of probable ECS E3 ubiquitin-protein ligase complexes.</text>
</comment>
<keyword id="KW-0025">Alternative splicing</keyword>
<keyword id="KW-0221">Differentiation</keyword>
<keyword id="KW-0238">DNA-binding</keyword>
<keyword id="KW-1017">Isopeptide bond</keyword>
<keyword id="KW-0488">Methylation</keyword>
<keyword id="KW-0524">Neurogenesis</keyword>
<keyword id="KW-0539">Nucleus</keyword>
<keyword id="KW-0597">Phosphoprotein</keyword>
<keyword id="KW-1185">Reference proteome</keyword>
<keyword id="KW-0804">Transcription</keyword>
<keyword id="KW-0805">Transcription regulation</keyword>
<keyword id="KW-0832">Ubl conjugation</keyword>
<sequence>MMNQSQRMAPVGSDKELSDLLDFSMMFPLPVANGKGRPASLAGTQFAGSGLEDRPSSGSWGNSDQNSSSFDPSRTYSEGAHFSESHNSLPSSTFLGPGLGGKSSERSAYATFGRDTSVSALTQAGFLPGELGLSSPGPLSPSGVKSGSQYYPSYPSNPRRRAADSGLDTQSKKVRKVPPGLPSSVYPSSSGDSYGRDAAAYPSAKTPGSAYPSPFYVADGSLHPSAELWSPPSQAGFGPMLGDGSSPLPLAPGSSSVGSGTFGGLQQQERMSYQLHGSEVNGTLPAVSSFSAAPGTYGGASGHTPPVSGADSLMGTRGTTASSSGDALGKALASIYSPDHSSNNFSPSPSTPVGSPQGLPGTSQWPRAGAPSALSPTYDGGLHGLSKMEDRLDEAIHVLRSHAVGTASDLHGLLPGHGALTTSFPGPVPLGGRHAGLVGGGHPEDGLTSGTSLLHTHASLPSQASSLPDLSQRPPDSYGGLGRAGAPAGASEIKREEKDDEESTSVADAEEDKKDLKAPRTRTSPDEDEDDLLPPEQKAEREKERRVANNARERLRVRDINEAFKELGRMCQLHLSSEKPQTKLLILHQAVAVILSLEQQVRERNLNPKAACLKRREEEKVSGVVGDPQLALSAAHPGLGEAHNPPGHL</sequence>
<proteinExistence type="evidence at transcript level"/>
<protein>
    <recommendedName>
        <fullName>Transcription factor E2-alpha</fullName>
    </recommendedName>
    <alternativeName>
        <fullName>Immunoglobulin-enhancer-binding factor E12/E47</fullName>
    </alternativeName>
    <alternativeName>
        <fullName>Transcription factor 3</fullName>
        <shortName>TCF-3</shortName>
    </alternativeName>
    <alternativeName>
        <fullName>Transcription regulator Pan</fullName>
    </alternativeName>
</protein>
<accession>P98180</accession>
<organism>
    <name type="scientific">Mesocricetus auratus</name>
    <name type="common">Golden hamster</name>
    <dbReference type="NCBI Taxonomy" id="10036"/>
    <lineage>
        <taxon>Eukaryota</taxon>
        <taxon>Metazoa</taxon>
        <taxon>Chordata</taxon>
        <taxon>Craniata</taxon>
        <taxon>Vertebrata</taxon>
        <taxon>Euteleostomi</taxon>
        <taxon>Mammalia</taxon>
        <taxon>Eutheria</taxon>
        <taxon>Euarchontoglires</taxon>
        <taxon>Glires</taxon>
        <taxon>Rodentia</taxon>
        <taxon>Myomorpha</taxon>
        <taxon>Muroidea</taxon>
        <taxon>Cricetidae</taxon>
        <taxon>Cricetinae</taxon>
        <taxon>Mesocricetus</taxon>
    </lineage>
</organism>
<name>TFE2_MESAU</name>
<evidence type="ECO:0000250" key="1"/>
<evidence type="ECO:0000250" key="2">
    <source>
        <dbReference type="UniProtKB" id="P15806"/>
    </source>
</evidence>
<evidence type="ECO:0000250" key="3">
    <source>
        <dbReference type="UniProtKB" id="P15923"/>
    </source>
</evidence>
<evidence type="ECO:0000255" key="4"/>
<evidence type="ECO:0000255" key="5">
    <source>
        <dbReference type="PROSITE-ProRule" id="PRU00981"/>
    </source>
</evidence>
<evidence type="ECO:0000256" key="6">
    <source>
        <dbReference type="SAM" id="MobiDB-lite"/>
    </source>
</evidence>
<evidence type="ECO:0000305" key="7"/>
<dbReference type="PIR" id="A37953">
    <property type="entry name" value="A37953"/>
</dbReference>
<dbReference type="PIR" id="B37953">
    <property type="entry name" value="B37953"/>
</dbReference>
<dbReference type="SMR" id="P98180"/>
<dbReference type="STRING" id="10036.ENSMAUP00000017320"/>
<dbReference type="eggNOG" id="KOG3910">
    <property type="taxonomic scope" value="Eukaryota"/>
</dbReference>
<dbReference type="Proteomes" id="UP000189706">
    <property type="component" value="Unplaced"/>
</dbReference>
<dbReference type="GO" id="GO:0000785">
    <property type="term" value="C:chromatin"/>
    <property type="evidence" value="ECO:0007669"/>
    <property type="project" value="TreeGrafter"/>
</dbReference>
<dbReference type="GO" id="GO:0005737">
    <property type="term" value="C:cytoplasm"/>
    <property type="evidence" value="ECO:0000250"/>
    <property type="project" value="UniProtKB"/>
</dbReference>
<dbReference type="GO" id="GO:0005634">
    <property type="term" value="C:nucleus"/>
    <property type="evidence" value="ECO:0000250"/>
    <property type="project" value="UniProtKB"/>
</dbReference>
<dbReference type="GO" id="GO:0032991">
    <property type="term" value="C:protein-containing complex"/>
    <property type="evidence" value="ECO:0000250"/>
    <property type="project" value="UniProtKB"/>
</dbReference>
<dbReference type="GO" id="GO:0005667">
    <property type="term" value="C:transcription regulator complex"/>
    <property type="evidence" value="ECO:0000250"/>
    <property type="project" value="UniProtKB"/>
</dbReference>
<dbReference type="GO" id="GO:0003677">
    <property type="term" value="F:DNA binding"/>
    <property type="evidence" value="ECO:0000250"/>
    <property type="project" value="UniProtKB"/>
</dbReference>
<dbReference type="GO" id="GO:0001228">
    <property type="term" value="F:DNA-binding transcription activator activity, RNA polymerase II-specific"/>
    <property type="evidence" value="ECO:0000314"/>
    <property type="project" value="GO_Central"/>
</dbReference>
<dbReference type="GO" id="GO:0003700">
    <property type="term" value="F:DNA-binding transcription factor activity"/>
    <property type="evidence" value="ECO:0000250"/>
    <property type="project" value="UniProtKB"/>
</dbReference>
<dbReference type="GO" id="GO:0140297">
    <property type="term" value="F:DNA-binding transcription factor binding"/>
    <property type="evidence" value="ECO:0000250"/>
    <property type="project" value="UniProtKB"/>
</dbReference>
<dbReference type="GO" id="GO:0070888">
    <property type="term" value="F:E-box binding"/>
    <property type="evidence" value="ECO:0000314"/>
    <property type="project" value="UniProtKB"/>
</dbReference>
<dbReference type="GO" id="GO:0046982">
    <property type="term" value="F:protein heterodimerization activity"/>
    <property type="evidence" value="ECO:0000250"/>
    <property type="project" value="UniProtKB"/>
</dbReference>
<dbReference type="GO" id="GO:0042803">
    <property type="term" value="F:protein homodimerization activity"/>
    <property type="evidence" value="ECO:0000250"/>
    <property type="project" value="UniProtKB"/>
</dbReference>
<dbReference type="GO" id="GO:0002326">
    <property type="term" value="P:B cell lineage commitment"/>
    <property type="evidence" value="ECO:0000250"/>
    <property type="project" value="UniProtKB"/>
</dbReference>
<dbReference type="GO" id="GO:0030154">
    <property type="term" value="P:cell differentiation"/>
    <property type="evidence" value="ECO:0007669"/>
    <property type="project" value="UniProtKB-KW"/>
</dbReference>
<dbReference type="GO" id="GO:0033152">
    <property type="term" value="P:immunoglobulin V(D)J recombination"/>
    <property type="evidence" value="ECO:0007669"/>
    <property type="project" value="TreeGrafter"/>
</dbReference>
<dbReference type="GO" id="GO:0007399">
    <property type="term" value="P:nervous system development"/>
    <property type="evidence" value="ECO:0007669"/>
    <property type="project" value="UniProtKB-KW"/>
</dbReference>
<dbReference type="GO" id="GO:0030890">
    <property type="term" value="P:positive regulation of B cell proliferation"/>
    <property type="evidence" value="ECO:0000250"/>
    <property type="project" value="UniProtKB"/>
</dbReference>
<dbReference type="GO" id="GO:0045787">
    <property type="term" value="P:positive regulation of cell cycle"/>
    <property type="evidence" value="ECO:0000250"/>
    <property type="project" value="UniProtKB"/>
</dbReference>
<dbReference type="GO" id="GO:0051091">
    <property type="term" value="P:positive regulation of DNA-binding transcription factor activity"/>
    <property type="evidence" value="ECO:0000250"/>
    <property type="project" value="UniProtKB"/>
</dbReference>
<dbReference type="GO" id="GO:0045893">
    <property type="term" value="P:positive regulation of DNA-templated transcription"/>
    <property type="evidence" value="ECO:0000250"/>
    <property type="project" value="UniProtKB"/>
</dbReference>
<dbReference type="GO" id="GO:0045666">
    <property type="term" value="P:positive regulation of neuron differentiation"/>
    <property type="evidence" value="ECO:0000250"/>
    <property type="project" value="UniProtKB"/>
</dbReference>
<dbReference type="GO" id="GO:0045944">
    <property type="term" value="P:positive regulation of transcription by RNA polymerase II"/>
    <property type="evidence" value="ECO:0000314"/>
    <property type="project" value="GO_Central"/>
</dbReference>
<dbReference type="GO" id="GO:2000045">
    <property type="term" value="P:regulation of G1/S transition of mitotic cell cycle"/>
    <property type="evidence" value="ECO:0000250"/>
    <property type="project" value="UniProtKB"/>
</dbReference>
<dbReference type="CDD" id="cd18945">
    <property type="entry name" value="bHLH_E-protein_TCF4_E2-2"/>
    <property type="match status" value="1"/>
</dbReference>
<dbReference type="FunFam" id="4.10.280.10:FF:000001">
    <property type="entry name" value="Putative transcription factor 12"/>
    <property type="match status" value="1"/>
</dbReference>
<dbReference type="Gene3D" id="4.10.280.10">
    <property type="entry name" value="Helix-loop-helix DNA-binding domain"/>
    <property type="match status" value="1"/>
</dbReference>
<dbReference type="InterPro" id="IPR011598">
    <property type="entry name" value="bHLH_dom"/>
</dbReference>
<dbReference type="InterPro" id="IPR036638">
    <property type="entry name" value="HLH_DNA-bd_sf"/>
</dbReference>
<dbReference type="InterPro" id="IPR051098">
    <property type="entry name" value="NeuroDiff_E-box_TFs"/>
</dbReference>
<dbReference type="PANTHER" id="PTHR11793">
    <property type="entry name" value="BASIC HELIX-LOOP-HELIX TRANSCRIPTION FACTOR"/>
    <property type="match status" value="1"/>
</dbReference>
<dbReference type="PANTHER" id="PTHR11793:SF7">
    <property type="entry name" value="TRANSCRIPTION FACTOR E2-ALPHA"/>
    <property type="match status" value="1"/>
</dbReference>
<dbReference type="Pfam" id="PF00010">
    <property type="entry name" value="HLH"/>
    <property type="match status" value="1"/>
</dbReference>
<dbReference type="SMART" id="SM00353">
    <property type="entry name" value="HLH"/>
    <property type="match status" value="1"/>
</dbReference>
<dbReference type="SUPFAM" id="SSF47459">
    <property type="entry name" value="HLH, helix-loop-helix DNA-binding domain"/>
    <property type="match status" value="1"/>
</dbReference>
<dbReference type="PROSITE" id="PS50888">
    <property type="entry name" value="BHLH"/>
    <property type="match status" value="1"/>
</dbReference>
<gene>
    <name type="primary">TCF3</name>
    <name type="synonym">PAN</name>
</gene>